<protein>
    <recommendedName>
        <fullName evidence="1">Ribonuclease HII</fullName>
        <shortName evidence="1">RNase HII</shortName>
        <ecNumber evidence="1">3.1.26.4</ecNumber>
    </recommendedName>
</protein>
<comment type="function">
    <text evidence="1">Endonuclease that specifically degrades the RNA of RNA-DNA hybrids.</text>
</comment>
<comment type="catalytic activity">
    <reaction evidence="1">
        <text>Endonucleolytic cleavage to 5'-phosphomonoester.</text>
        <dbReference type="EC" id="3.1.26.4"/>
    </reaction>
</comment>
<comment type="cofactor">
    <cofactor evidence="1">
        <name>Mn(2+)</name>
        <dbReference type="ChEBI" id="CHEBI:29035"/>
    </cofactor>
    <cofactor evidence="1">
        <name>Mg(2+)</name>
        <dbReference type="ChEBI" id="CHEBI:18420"/>
    </cofactor>
    <text evidence="1">Manganese or magnesium. Binds 1 divalent metal ion per monomer in the absence of substrate. May bind a second metal ion after substrate binding.</text>
</comment>
<comment type="subcellular location">
    <subcellularLocation>
        <location evidence="1">Cytoplasm</location>
    </subcellularLocation>
</comment>
<comment type="similarity">
    <text evidence="1">Belongs to the RNase HII family.</text>
</comment>
<gene>
    <name evidence="1" type="primary">rnhB</name>
    <name type="ordered locus">SynWH7803_0373</name>
</gene>
<name>RNH2_SYNPW</name>
<keyword id="KW-0963">Cytoplasm</keyword>
<keyword id="KW-0255">Endonuclease</keyword>
<keyword id="KW-0378">Hydrolase</keyword>
<keyword id="KW-0464">Manganese</keyword>
<keyword id="KW-0479">Metal-binding</keyword>
<keyword id="KW-0540">Nuclease</keyword>
<keyword id="KW-1185">Reference proteome</keyword>
<sequence length="194" mass="20685">MTVGVDEVGRGCLFGPVFAAAVSLTGAADAELTALGLTDSKALSAKRRADLVPHIQAKASAWALGQGSAREIDAHGIRVATELAMLRALQKLPIQPELVLVDGVLPLRLWPGAQRTIVRGDSQEASIAAASVLAKVARDGLMCRLAERFPEYGFERHAGYGTALHRQALITSGPTALHRKSFLTRLFPRDDGLR</sequence>
<evidence type="ECO:0000255" key="1">
    <source>
        <dbReference type="HAMAP-Rule" id="MF_00052"/>
    </source>
</evidence>
<evidence type="ECO:0000255" key="2">
    <source>
        <dbReference type="PROSITE-ProRule" id="PRU01319"/>
    </source>
</evidence>
<dbReference type="EC" id="3.1.26.4" evidence="1"/>
<dbReference type="EMBL" id="CT971583">
    <property type="protein sequence ID" value="CAK22799.1"/>
    <property type="molecule type" value="Genomic_DNA"/>
</dbReference>
<dbReference type="SMR" id="A5GIN4"/>
<dbReference type="STRING" id="32051.SynWH7803_0373"/>
<dbReference type="KEGG" id="syx:SynWH7803_0373"/>
<dbReference type="eggNOG" id="COG0164">
    <property type="taxonomic scope" value="Bacteria"/>
</dbReference>
<dbReference type="HOGENOM" id="CLU_036532_3_1_3"/>
<dbReference type="OrthoDB" id="9803420at2"/>
<dbReference type="Proteomes" id="UP000001566">
    <property type="component" value="Chromosome"/>
</dbReference>
<dbReference type="GO" id="GO:0005737">
    <property type="term" value="C:cytoplasm"/>
    <property type="evidence" value="ECO:0007669"/>
    <property type="project" value="UniProtKB-SubCell"/>
</dbReference>
<dbReference type="GO" id="GO:0032299">
    <property type="term" value="C:ribonuclease H2 complex"/>
    <property type="evidence" value="ECO:0007669"/>
    <property type="project" value="TreeGrafter"/>
</dbReference>
<dbReference type="GO" id="GO:0030145">
    <property type="term" value="F:manganese ion binding"/>
    <property type="evidence" value="ECO:0007669"/>
    <property type="project" value="UniProtKB-UniRule"/>
</dbReference>
<dbReference type="GO" id="GO:0003723">
    <property type="term" value="F:RNA binding"/>
    <property type="evidence" value="ECO:0007669"/>
    <property type="project" value="InterPro"/>
</dbReference>
<dbReference type="GO" id="GO:0004523">
    <property type="term" value="F:RNA-DNA hybrid ribonuclease activity"/>
    <property type="evidence" value="ECO:0007669"/>
    <property type="project" value="UniProtKB-UniRule"/>
</dbReference>
<dbReference type="GO" id="GO:0043137">
    <property type="term" value="P:DNA replication, removal of RNA primer"/>
    <property type="evidence" value="ECO:0007669"/>
    <property type="project" value="TreeGrafter"/>
</dbReference>
<dbReference type="GO" id="GO:0006298">
    <property type="term" value="P:mismatch repair"/>
    <property type="evidence" value="ECO:0007669"/>
    <property type="project" value="TreeGrafter"/>
</dbReference>
<dbReference type="CDD" id="cd07182">
    <property type="entry name" value="RNase_HII_bacteria_HII_like"/>
    <property type="match status" value="1"/>
</dbReference>
<dbReference type="Gene3D" id="3.30.420.10">
    <property type="entry name" value="Ribonuclease H-like superfamily/Ribonuclease H"/>
    <property type="match status" value="1"/>
</dbReference>
<dbReference type="HAMAP" id="MF_00052_B">
    <property type="entry name" value="RNase_HII_B"/>
    <property type="match status" value="1"/>
</dbReference>
<dbReference type="InterPro" id="IPR022898">
    <property type="entry name" value="RNase_HII"/>
</dbReference>
<dbReference type="InterPro" id="IPR001352">
    <property type="entry name" value="RNase_HII/HIII"/>
</dbReference>
<dbReference type="InterPro" id="IPR024567">
    <property type="entry name" value="RNase_HII/HIII_dom"/>
</dbReference>
<dbReference type="InterPro" id="IPR012337">
    <property type="entry name" value="RNaseH-like_sf"/>
</dbReference>
<dbReference type="InterPro" id="IPR036397">
    <property type="entry name" value="RNaseH_sf"/>
</dbReference>
<dbReference type="NCBIfam" id="NF000595">
    <property type="entry name" value="PRK00015.1-3"/>
    <property type="match status" value="1"/>
</dbReference>
<dbReference type="NCBIfam" id="NF010537">
    <property type="entry name" value="PRK13925.1"/>
    <property type="match status" value="1"/>
</dbReference>
<dbReference type="PANTHER" id="PTHR10954">
    <property type="entry name" value="RIBONUCLEASE H2 SUBUNIT A"/>
    <property type="match status" value="1"/>
</dbReference>
<dbReference type="PANTHER" id="PTHR10954:SF18">
    <property type="entry name" value="RIBONUCLEASE HII"/>
    <property type="match status" value="1"/>
</dbReference>
<dbReference type="Pfam" id="PF01351">
    <property type="entry name" value="RNase_HII"/>
    <property type="match status" value="1"/>
</dbReference>
<dbReference type="SUPFAM" id="SSF53098">
    <property type="entry name" value="Ribonuclease H-like"/>
    <property type="match status" value="1"/>
</dbReference>
<dbReference type="PROSITE" id="PS51975">
    <property type="entry name" value="RNASE_H_2"/>
    <property type="match status" value="1"/>
</dbReference>
<feature type="chain" id="PRO_0000334965" description="Ribonuclease HII">
    <location>
        <begin position="1"/>
        <end position="194"/>
    </location>
</feature>
<feature type="domain" description="RNase H type-2" evidence="2">
    <location>
        <begin position="1"/>
        <end position="194"/>
    </location>
</feature>
<feature type="binding site" evidence="1">
    <location>
        <position position="6"/>
    </location>
    <ligand>
        <name>a divalent metal cation</name>
        <dbReference type="ChEBI" id="CHEBI:60240"/>
    </ligand>
</feature>
<feature type="binding site" evidence="1">
    <location>
        <position position="7"/>
    </location>
    <ligand>
        <name>a divalent metal cation</name>
        <dbReference type="ChEBI" id="CHEBI:60240"/>
    </ligand>
</feature>
<feature type="binding site" evidence="1">
    <location>
        <position position="102"/>
    </location>
    <ligand>
        <name>a divalent metal cation</name>
        <dbReference type="ChEBI" id="CHEBI:60240"/>
    </ligand>
</feature>
<accession>A5GIN4</accession>
<reference key="1">
    <citation type="submission" date="2006-05" db="EMBL/GenBank/DDBJ databases">
        <authorList>
            <consortium name="Genoscope"/>
        </authorList>
    </citation>
    <scope>NUCLEOTIDE SEQUENCE [LARGE SCALE GENOMIC DNA]</scope>
    <source>
        <strain>WH7803</strain>
    </source>
</reference>
<organism>
    <name type="scientific">Synechococcus sp. (strain WH7803)</name>
    <dbReference type="NCBI Taxonomy" id="32051"/>
    <lineage>
        <taxon>Bacteria</taxon>
        <taxon>Bacillati</taxon>
        <taxon>Cyanobacteriota</taxon>
        <taxon>Cyanophyceae</taxon>
        <taxon>Synechococcales</taxon>
        <taxon>Synechococcaceae</taxon>
        <taxon>Synechococcus</taxon>
    </lineage>
</organism>
<proteinExistence type="inferred from homology"/>